<accession>A1VYF9</accession>
<name>ACP_CAMJJ</name>
<reference key="1">
    <citation type="submission" date="2006-12" db="EMBL/GenBank/DDBJ databases">
        <authorList>
            <person name="Fouts D.E."/>
            <person name="Nelson K.E."/>
            <person name="Sebastian Y."/>
        </authorList>
    </citation>
    <scope>NUCLEOTIDE SEQUENCE [LARGE SCALE GENOMIC DNA]</scope>
    <source>
        <strain>81-176</strain>
    </source>
</reference>
<keyword id="KW-0963">Cytoplasm</keyword>
<keyword id="KW-0275">Fatty acid biosynthesis</keyword>
<keyword id="KW-0276">Fatty acid metabolism</keyword>
<keyword id="KW-0444">Lipid biosynthesis</keyword>
<keyword id="KW-0443">Lipid metabolism</keyword>
<keyword id="KW-0596">Phosphopantetheine</keyword>
<keyword id="KW-0597">Phosphoprotein</keyword>
<protein>
    <recommendedName>
        <fullName evidence="1">Acyl carrier protein</fullName>
        <shortName evidence="1">ACP</shortName>
    </recommendedName>
</protein>
<feature type="chain" id="PRO_1000066583" description="Acyl carrier protein">
    <location>
        <begin position="1"/>
        <end position="77"/>
    </location>
</feature>
<feature type="domain" description="Carrier" evidence="2">
    <location>
        <begin position="1"/>
        <end position="76"/>
    </location>
</feature>
<feature type="modified residue" description="O-(pantetheine 4'-phosphoryl)serine" evidence="2">
    <location>
        <position position="36"/>
    </location>
</feature>
<proteinExistence type="inferred from homology"/>
<organism>
    <name type="scientific">Campylobacter jejuni subsp. jejuni serotype O:23/36 (strain 81-176)</name>
    <dbReference type="NCBI Taxonomy" id="354242"/>
    <lineage>
        <taxon>Bacteria</taxon>
        <taxon>Pseudomonadati</taxon>
        <taxon>Campylobacterota</taxon>
        <taxon>Epsilonproteobacteria</taxon>
        <taxon>Campylobacterales</taxon>
        <taxon>Campylobacteraceae</taxon>
        <taxon>Campylobacter</taxon>
    </lineage>
</organism>
<sequence length="77" mass="8598">MATFDDVKAVVVEQLSIDADAVKMESKIIEDLGADSLDVVELIMALEEKFEVEIPDSDAEKLIKIEDVVNYIDNLKK</sequence>
<evidence type="ECO:0000255" key="1">
    <source>
        <dbReference type="HAMAP-Rule" id="MF_01217"/>
    </source>
</evidence>
<evidence type="ECO:0000255" key="2">
    <source>
        <dbReference type="PROSITE-ProRule" id="PRU00258"/>
    </source>
</evidence>
<comment type="function">
    <text evidence="1">Carrier of the growing fatty acid chain in fatty acid biosynthesis.</text>
</comment>
<comment type="pathway">
    <text evidence="1">Lipid metabolism; fatty acid biosynthesis.</text>
</comment>
<comment type="subcellular location">
    <subcellularLocation>
        <location evidence="1">Cytoplasm</location>
    </subcellularLocation>
</comment>
<comment type="PTM">
    <text evidence="1">4'-phosphopantetheine is transferred from CoA to a specific serine of apo-ACP by AcpS. This modification is essential for activity because fatty acids are bound in thioester linkage to the sulfhydryl of the prosthetic group.</text>
</comment>
<comment type="similarity">
    <text evidence="1">Belongs to the acyl carrier protein (ACP) family.</text>
</comment>
<gene>
    <name evidence="1" type="primary">acpP</name>
    <name type="ordered locus">CJJ81176_0468</name>
</gene>
<dbReference type="EMBL" id="CP000538">
    <property type="protein sequence ID" value="EAQ73375.1"/>
    <property type="molecule type" value="Genomic_DNA"/>
</dbReference>
<dbReference type="RefSeq" id="WP_002854831.1">
    <property type="nucleotide sequence ID" value="NC_008787.1"/>
</dbReference>
<dbReference type="SMR" id="A1VYF9"/>
<dbReference type="KEGG" id="cjj:CJJ81176_0468"/>
<dbReference type="eggNOG" id="COG0236">
    <property type="taxonomic scope" value="Bacteria"/>
</dbReference>
<dbReference type="HOGENOM" id="CLU_108696_5_1_7"/>
<dbReference type="UniPathway" id="UPA00094"/>
<dbReference type="Proteomes" id="UP000000646">
    <property type="component" value="Chromosome"/>
</dbReference>
<dbReference type="GO" id="GO:0005829">
    <property type="term" value="C:cytosol"/>
    <property type="evidence" value="ECO:0007669"/>
    <property type="project" value="TreeGrafter"/>
</dbReference>
<dbReference type="GO" id="GO:0016020">
    <property type="term" value="C:membrane"/>
    <property type="evidence" value="ECO:0007669"/>
    <property type="project" value="GOC"/>
</dbReference>
<dbReference type="GO" id="GO:0000035">
    <property type="term" value="F:acyl binding"/>
    <property type="evidence" value="ECO:0007669"/>
    <property type="project" value="TreeGrafter"/>
</dbReference>
<dbReference type="GO" id="GO:0000036">
    <property type="term" value="F:acyl carrier activity"/>
    <property type="evidence" value="ECO:0007669"/>
    <property type="project" value="UniProtKB-UniRule"/>
</dbReference>
<dbReference type="GO" id="GO:0009245">
    <property type="term" value="P:lipid A biosynthetic process"/>
    <property type="evidence" value="ECO:0007669"/>
    <property type="project" value="TreeGrafter"/>
</dbReference>
<dbReference type="Gene3D" id="1.10.1200.10">
    <property type="entry name" value="ACP-like"/>
    <property type="match status" value="1"/>
</dbReference>
<dbReference type="HAMAP" id="MF_01217">
    <property type="entry name" value="Acyl_carrier"/>
    <property type="match status" value="1"/>
</dbReference>
<dbReference type="InterPro" id="IPR003231">
    <property type="entry name" value="ACP"/>
</dbReference>
<dbReference type="InterPro" id="IPR036736">
    <property type="entry name" value="ACP-like_sf"/>
</dbReference>
<dbReference type="InterPro" id="IPR009081">
    <property type="entry name" value="PP-bd_ACP"/>
</dbReference>
<dbReference type="InterPro" id="IPR006162">
    <property type="entry name" value="Ppantetheine_attach_site"/>
</dbReference>
<dbReference type="NCBIfam" id="TIGR00517">
    <property type="entry name" value="acyl_carrier"/>
    <property type="match status" value="1"/>
</dbReference>
<dbReference type="NCBIfam" id="NF002148">
    <property type="entry name" value="PRK00982.1-2"/>
    <property type="match status" value="1"/>
</dbReference>
<dbReference type="NCBIfam" id="NF002150">
    <property type="entry name" value="PRK00982.1-4"/>
    <property type="match status" value="1"/>
</dbReference>
<dbReference type="PANTHER" id="PTHR20863">
    <property type="entry name" value="ACYL CARRIER PROTEIN"/>
    <property type="match status" value="1"/>
</dbReference>
<dbReference type="PANTHER" id="PTHR20863:SF76">
    <property type="entry name" value="CARRIER DOMAIN-CONTAINING PROTEIN"/>
    <property type="match status" value="1"/>
</dbReference>
<dbReference type="Pfam" id="PF00550">
    <property type="entry name" value="PP-binding"/>
    <property type="match status" value="1"/>
</dbReference>
<dbReference type="SUPFAM" id="SSF47336">
    <property type="entry name" value="ACP-like"/>
    <property type="match status" value="1"/>
</dbReference>
<dbReference type="PROSITE" id="PS50075">
    <property type="entry name" value="CARRIER"/>
    <property type="match status" value="1"/>
</dbReference>
<dbReference type="PROSITE" id="PS00012">
    <property type="entry name" value="PHOSPHOPANTETHEINE"/>
    <property type="match status" value="1"/>
</dbReference>